<proteinExistence type="evidence at protein level"/>
<sequence>MVMEVTETERWCVVTGGRGFAARHLVEMLVRYQMFHVRIADLAPAIVLNPHEETGILGEAIRSGRVQYVSADLRNKTQVVKGFQGAEVVFHMAAPDSSINNHQLQYSVNVQGTTNVIDACIEVGVKRLIYTSSPSVVFDGVHGTLNADESLPYPPKHNDSYSATKAEGEALILKANGRSGLLTCCIRPSSIFGPGDKLMVPSLVTAARAGKSKFIIGDGSNFYDFTYVENVVHAHVCAERALASGGEVCAKAAGQAYFITNMEPIKFWEFMSQLLEGLGYERPSIKIPASLMMPIAYLVELAYKLLGPYGMKVPVLTPSRVRLLSCNRTFDSSKAKDRLGYSPVVPLQEGIKRTIDSFSHLKAQNQPKTEVTETIQWKKQTLIAIVILITLYHNFVATTGSSSVIITAVSKVLLVSSIFMFINGILPEKMKVFGSKKID</sequence>
<name>HSDD1_ARATH</name>
<reference key="1">
    <citation type="journal article" date="2006" name="J. Biol. Chem.">
        <title>Molecular and enzymatic characterizations of novel bifunctional 3beta-hydroxysteroid dehydrogenases/C-4 decarboxylases from Arabidopsis thaliana.</title>
        <authorList>
            <person name="Rahier A."/>
            <person name="Darnet S."/>
            <person name="Bouvier F."/>
            <person name="Camara B."/>
            <person name="Bard M."/>
        </authorList>
    </citation>
    <scope>NUCLEOTIDE SEQUENCE [MRNA] (ISOFORM 2)</scope>
    <scope>FUNCTION</scope>
    <scope>CATALYTIC ACTIVITY</scope>
    <scope>PATHWAY</scope>
    <scope>BIOPHYSICOCHEMICAL PROPERTIES</scope>
    <source>
        <strain>cv. Wassilewskija</strain>
    </source>
</reference>
<reference key="2">
    <citation type="journal article" date="2000" name="Nature">
        <title>Sequence and analysis of chromosome 1 of the plant Arabidopsis thaliana.</title>
        <authorList>
            <person name="Theologis A."/>
            <person name="Ecker J.R."/>
            <person name="Palm C.J."/>
            <person name="Federspiel N.A."/>
            <person name="Kaul S."/>
            <person name="White O."/>
            <person name="Alonso J."/>
            <person name="Altafi H."/>
            <person name="Araujo R."/>
            <person name="Bowman C.L."/>
            <person name="Brooks S.Y."/>
            <person name="Buehler E."/>
            <person name="Chan A."/>
            <person name="Chao Q."/>
            <person name="Chen H."/>
            <person name="Cheuk R.F."/>
            <person name="Chin C.W."/>
            <person name="Chung M.K."/>
            <person name="Conn L."/>
            <person name="Conway A.B."/>
            <person name="Conway A.R."/>
            <person name="Creasy T.H."/>
            <person name="Dewar K."/>
            <person name="Dunn P."/>
            <person name="Etgu P."/>
            <person name="Feldblyum T.V."/>
            <person name="Feng J.-D."/>
            <person name="Fong B."/>
            <person name="Fujii C.Y."/>
            <person name="Gill J.E."/>
            <person name="Goldsmith A.D."/>
            <person name="Haas B."/>
            <person name="Hansen N.F."/>
            <person name="Hughes B."/>
            <person name="Huizar L."/>
            <person name="Hunter J.L."/>
            <person name="Jenkins J."/>
            <person name="Johnson-Hopson C."/>
            <person name="Khan S."/>
            <person name="Khaykin E."/>
            <person name="Kim C.J."/>
            <person name="Koo H.L."/>
            <person name="Kremenetskaia I."/>
            <person name="Kurtz D.B."/>
            <person name="Kwan A."/>
            <person name="Lam B."/>
            <person name="Langin-Hooper S."/>
            <person name="Lee A."/>
            <person name="Lee J.M."/>
            <person name="Lenz C.A."/>
            <person name="Li J.H."/>
            <person name="Li Y.-P."/>
            <person name="Lin X."/>
            <person name="Liu S.X."/>
            <person name="Liu Z.A."/>
            <person name="Luros J.S."/>
            <person name="Maiti R."/>
            <person name="Marziali A."/>
            <person name="Militscher J."/>
            <person name="Miranda M."/>
            <person name="Nguyen M."/>
            <person name="Nierman W.C."/>
            <person name="Osborne B.I."/>
            <person name="Pai G."/>
            <person name="Peterson J."/>
            <person name="Pham P.K."/>
            <person name="Rizzo M."/>
            <person name="Rooney T."/>
            <person name="Rowley D."/>
            <person name="Sakano H."/>
            <person name="Salzberg S.L."/>
            <person name="Schwartz J.R."/>
            <person name="Shinn P."/>
            <person name="Southwick A.M."/>
            <person name="Sun H."/>
            <person name="Tallon L.J."/>
            <person name="Tambunga G."/>
            <person name="Toriumi M.J."/>
            <person name="Town C.D."/>
            <person name="Utterback T."/>
            <person name="Van Aken S."/>
            <person name="Vaysberg M."/>
            <person name="Vysotskaia V.S."/>
            <person name="Walker M."/>
            <person name="Wu D."/>
            <person name="Yu G."/>
            <person name="Fraser C.M."/>
            <person name="Venter J.C."/>
            <person name="Davis R.W."/>
        </authorList>
    </citation>
    <scope>NUCLEOTIDE SEQUENCE [LARGE SCALE GENOMIC DNA]</scope>
    <source>
        <strain>cv. Columbia</strain>
    </source>
</reference>
<reference key="3">
    <citation type="journal article" date="2017" name="Plant J.">
        <title>Araport11: a complete reannotation of the Arabidopsis thaliana reference genome.</title>
        <authorList>
            <person name="Cheng C.Y."/>
            <person name="Krishnakumar V."/>
            <person name="Chan A.P."/>
            <person name="Thibaud-Nissen F."/>
            <person name="Schobel S."/>
            <person name="Town C.D."/>
        </authorList>
    </citation>
    <scope>GENOME REANNOTATION</scope>
    <source>
        <strain>cv. Columbia</strain>
    </source>
</reference>
<reference key="4">
    <citation type="journal article" date="2002" name="Science">
        <title>Functional annotation of a full-length Arabidopsis cDNA collection.</title>
        <authorList>
            <person name="Seki M."/>
            <person name="Narusaka M."/>
            <person name="Kamiya A."/>
            <person name="Ishida J."/>
            <person name="Satou M."/>
            <person name="Sakurai T."/>
            <person name="Nakajima M."/>
            <person name="Enju A."/>
            <person name="Akiyama K."/>
            <person name="Oono Y."/>
            <person name="Muramatsu M."/>
            <person name="Hayashizaki Y."/>
            <person name="Kawai J."/>
            <person name="Carninci P."/>
            <person name="Itoh M."/>
            <person name="Ishii Y."/>
            <person name="Arakawa T."/>
            <person name="Shibata K."/>
            <person name="Shinagawa A."/>
            <person name="Shinozaki K."/>
        </authorList>
    </citation>
    <scope>NUCLEOTIDE SEQUENCE [LARGE SCALE MRNA] (ISOFORM 1)</scope>
    <source>
        <strain>cv. Columbia</strain>
    </source>
</reference>
<reference key="5">
    <citation type="journal article" date="2003" name="Science">
        <title>Empirical analysis of transcriptional activity in the Arabidopsis genome.</title>
        <authorList>
            <person name="Yamada K."/>
            <person name="Lim J."/>
            <person name="Dale J.M."/>
            <person name="Chen H."/>
            <person name="Shinn P."/>
            <person name="Palm C.J."/>
            <person name="Southwick A.M."/>
            <person name="Wu H.C."/>
            <person name="Kim C.J."/>
            <person name="Nguyen M."/>
            <person name="Pham P.K."/>
            <person name="Cheuk R.F."/>
            <person name="Karlin-Newmann G."/>
            <person name="Liu S.X."/>
            <person name="Lam B."/>
            <person name="Sakano H."/>
            <person name="Wu T."/>
            <person name="Yu G."/>
            <person name="Miranda M."/>
            <person name="Quach H.L."/>
            <person name="Tripp M."/>
            <person name="Chang C.H."/>
            <person name="Lee J.M."/>
            <person name="Toriumi M.J."/>
            <person name="Chan M.M."/>
            <person name="Tang C.C."/>
            <person name="Onodera C.S."/>
            <person name="Deng J.M."/>
            <person name="Akiyama K."/>
            <person name="Ansari Y."/>
            <person name="Arakawa T."/>
            <person name="Banh J."/>
            <person name="Banno F."/>
            <person name="Bowser L."/>
            <person name="Brooks S.Y."/>
            <person name="Carninci P."/>
            <person name="Chao Q."/>
            <person name="Choy N."/>
            <person name="Enju A."/>
            <person name="Goldsmith A.D."/>
            <person name="Gurjal M."/>
            <person name="Hansen N.F."/>
            <person name="Hayashizaki Y."/>
            <person name="Johnson-Hopson C."/>
            <person name="Hsuan V.W."/>
            <person name="Iida K."/>
            <person name="Karnes M."/>
            <person name="Khan S."/>
            <person name="Koesema E."/>
            <person name="Ishida J."/>
            <person name="Jiang P.X."/>
            <person name="Jones T."/>
            <person name="Kawai J."/>
            <person name="Kamiya A."/>
            <person name="Meyers C."/>
            <person name="Nakajima M."/>
            <person name="Narusaka M."/>
            <person name="Seki M."/>
            <person name="Sakurai T."/>
            <person name="Satou M."/>
            <person name="Tamse R."/>
            <person name="Vaysberg M."/>
            <person name="Wallender E.K."/>
            <person name="Wong C."/>
            <person name="Yamamura Y."/>
            <person name="Yuan S."/>
            <person name="Shinozaki K."/>
            <person name="Davis R.W."/>
            <person name="Theologis A."/>
            <person name="Ecker J.R."/>
        </authorList>
    </citation>
    <scope>NUCLEOTIDE SEQUENCE [LARGE SCALE MRNA] (ISOFORM 1)</scope>
    <source>
        <strain>cv. Columbia</strain>
    </source>
</reference>
<reference key="6">
    <citation type="submission" date="2002-03" db="EMBL/GenBank/DDBJ databases">
        <title>Full-length cDNA from Arabidopsis thaliana.</title>
        <authorList>
            <person name="Brover V.V."/>
            <person name="Troukhan M.E."/>
            <person name="Alexandrov N.A."/>
            <person name="Lu Y.-P."/>
            <person name="Flavell R.B."/>
            <person name="Feldmann K.A."/>
        </authorList>
    </citation>
    <scope>NUCLEOTIDE SEQUENCE [LARGE SCALE MRNA] (ISOFORM 2)</scope>
</reference>
<reference key="7">
    <citation type="journal article" date="2007" name="FEBS Lett.">
        <title>Reticulon-like proteins in Arabidopsis thaliana: structural organization and ER localization.</title>
        <authorList>
            <person name="Nziengui H."/>
            <person name="Bouhidel K."/>
            <person name="Pillon D."/>
            <person name="Der C."/>
            <person name="Marty F."/>
            <person name="Schoefs B."/>
        </authorList>
    </citation>
    <scope>GENE FAMILY</scope>
    <scope>NOMENCLATURE</scope>
</reference>
<reference key="8">
    <citation type="journal article" date="2009" name="Plant Physiol.">
        <title>Homology modeling and site-directed mutagenesis reveal catalytic key amino acids of 3beta-hydroxysteroid-dehydrogenase/C4-decarboxylase from Arabidopsis.</title>
        <authorList>
            <person name="Rahier A."/>
            <person name="Bergdoll M."/>
            <person name="Genot G."/>
            <person name="Bouvier F."/>
            <person name="Camara B."/>
        </authorList>
    </citation>
    <scope>FUNCTION</scope>
    <scope>MUTAGENESIS OF ASP-41; ASP-72; THR-131; SER-133; SER-135; TYR-161; LYS-165; ARG-320 AND ARG-328</scope>
    <scope>BIOPHYSICOCHEMICAL PROPERTIES</scope>
    <scope>CATALYTIC ACTIVITY</scope>
</reference>
<reference key="9">
    <citation type="journal article" date="2012" name="Mol. Cells">
        <title>Overexpression of 3beta-hydroxysteroid dehydrogenases/C-4 decarboxylases causes growth defects possibly due to abnormal auxin transport in Arabidopsis.</title>
        <authorList>
            <person name="Kim B."/>
            <person name="Kim G."/>
            <person name="Fujioka S."/>
            <person name="Takatsuto S."/>
            <person name="Choe S."/>
        </authorList>
    </citation>
    <scope>FUNCTION</scope>
    <scope>DISRUPTION PHENOTYPE</scope>
    <source>
        <strain>cv. Columbia</strain>
    </source>
</reference>
<gene>
    <name evidence="9" type="primary">3BETAHSD/D1</name>
    <name evidence="10" type="synonym">RTNLB24</name>
    <name evidence="13" type="ordered locus">At1g47290</name>
    <name evidence="14" type="ORF">T3F24.9</name>
</gene>
<evidence type="ECO:0000250" key="1">
    <source>
        <dbReference type="UniProtKB" id="O43050"/>
    </source>
</evidence>
<evidence type="ECO:0000250" key="2">
    <source>
        <dbReference type="UniProtKB" id="Q12068"/>
    </source>
</evidence>
<evidence type="ECO:0000255" key="3"/>
<evidence type="ECO:0000255" key="4">
    <source>
        <dbReference type="PROSITE-ProRule" id="PRU00170"/>
    </source>
</evidence>
<evidence type="ECO:0000255" key="5">
    <source>
        <dbReference type="PROSITE-ProRule" id="PRU00498"/>
    </source>
</evidence>
<evidence type="ECO:0000269" key="6">
    <source>
    </source>
</evidence>
<evidence type="ECO:0000269" key="7">
    <source>
    </source>
</evidence>
<evidence type="ECO:0000269" key="8">
    <source>
    </source>
</evidence>
<evidence type="ECO:0000303" key="9">
    <source>
    </source>
</evidence>
<evidence type="ECO:0000303" key="10">
    <source>
    </source>
</evidence>
<evidence type="ECO:0000303" key="11">
    <source ref="6"/>
</evidence>
<evidence type="ECO:0000305" key="12"/>
<evidence type="ECO:0000312" key="13">
    <source>
        <dbReference type="Araport" id="AT1G47290"/>
    </source>
</evidence>
<evidence type="ECO:0000312" key="14">
    <source>
        <dbReference type="EMBL" id="AAG11424.1"/>
    </source>
</evidence>
<protein>
    <recommendedName>
        <fullName evidence="9">3beta-hydroxysteroid-dehydrogenase/decarboxylase isoform 1</fullName>
        <shortName evidence="9">At3BETAHSD/D1</shortName>
        <ecNumber evidence="6 7">1.1.1.418</ecNumber>
    </recommendedName>
    <alternativeName>
        <fullName>4alpha-carboxysterol-C3-dehydrogenase/C4-decarboxylase isoform 1-1</fullName>
    </alternativeName>
    <alternativeName>
        <fullName evidence="10">Reticulon-like protein B24</fullName>
        <shortName evidence="10">AtRTNLB24</shortName>
    </alternativeName>
    <alternativeName>
        <fullName>Sterol-4-alpha-carboxylate 3-dehydrogenase 1, decarboxylating</fullName>
    </alternativeName>
</protein>
<organism>
    <name type="scientific">Arabidopsis thaliana</name>
    <name type="common">Mouse-ear cress</name>
    <dbReference type="NCBI Taxonomy" id="3702"/>
    <lineage>
        <taxon>Eukaryota</taxon>
        <taxon>Viridiplantae</taxon>
        <taxon>Streptophyta</taxon>
        <taxon>Embryophyta</taxon>
        <taxon>Tracheophyta</taxon>
        <taxon>Spermatophyta</taxon>
        <taxon>Magnoliopsida</taxon>
        <taxon>eudicotyledons</taxon>
        <taxon>Gunneridae</taxon>
        <taxon>Pentapetalae</taxon>
        <taxon>rosids</taxon>
        <taxon>malvids</taxon>
        <taxon>Brassicales</taxon>
        <taxon>Brassicaceae</taxon>
        <taxon>Camelineae</taxon>
        <taxon>Arabidopsis</taxon>
    </lineage>
</organism>
<comment type="function">
    <text evidence="6 8">3beta-hydroxysteroid-dehydrogenase/decarboxylase involved in sterol synthesis (PubMed:16835224). Catalyzes the formation of 3-oxosteroids from 3beta-hydroxysteroids-4alpha-carboxylate (PubMed:16835224). Involved in the regulation of inflorescence internodes and leaves growth, probably by affecting auxin transporter activity possibly by altering sterol composition in the membranes (PubMed:22673766).</text>
</comment>
<comment type="catalytic activity">
    <reaction evidence="6 7">
        <text>a 3beta-hydroxysteroid-4alpha-carboxylate + NAD(+) = a 3-oxosteroid + CO2 + NADH</text>
        <dbReference type="Rhea" id="RHEA:34775"/>
        <dbReference type="ChEBI" id="CHEBI:16526"/>
        <dbReference type="ChEBI" id="CHEBI:47788"/>
        <dbReference type="ChEBI" id="CHEBI:57540"/>
        <dbReference type="ChEBI" id="CHEBI:57945"/>
        <dbReference type="ChEBI" id="CHEBI:136966"/>
        <dbReference type="EC" id="1.1.1.418"/>
    </reaction>
</comment>
<comment type="catalytic activity">
    <reaction evidence="6 7">
        <text>4alpha-carboxy-4beta,14alpha-dimethyl-9beta,19-cyclo-5alpha-ergost-24(24(1))-en-3beta-ol + NAD(+) = cycloeucalenone + CO2 + NADH</text>
        <dbReference type="Rhea" id="RHEA:59016"/>
        <dbReference type="ChEBI" id="CHEBI:16526"/>
        <dbReference type="ChEBI" id="CHEBI:57540"/>
        <dbReference type="ChEBI" id="CHEBI:57945"/>
        <dbReference type="ChEBI" id="CHEBI:142915"/>
        <dbReference type="ChEBI" id="CHEBI:142916"/>
        <dbReference type="EC" id="1.1.1.418"/>
    </reaction>
</comment>
<comment type="biophysicochemical properties">
    <kinetics>
        <KM evidence="7">0.13 mM for 4alpha-carboxy-5alpha-cholest-7-en-3beta-ol</KM>
        <KM evidence="7">0.26 mM for 4alpha-carboxy-4beta-methyl-5alpha-cholest-8,24-dien-3beta-ol</KM>
        <KM evidence="6">134 uM for 4alpha-carboxy-cholest-7-en-3beta-ol</KM>
        <KM evidence="6">112 uM for 3alpha-deutero-4alpha-carboxy-cholest-7-en-3beta-ol</KM>
        <KM evidence="6">383 uM for 4alpha-carboxy-cholest-7-en-3alpha-ol</KM>
        <KM evidence="6">274 uM for 4alpha-carboxy-4beta-methyl-cholest-8,24-dien-3beta-ol</KM>
        <KM evidence="6">8 uM for NAD(+)</KM>
        <Vmax evidence="7">88.0 nmol/h/mg enzyme with 4alpha-carboxy-5alpha-cholest-7-en-3beta-ol as substrate</Vmax>
        <Vmax evidence="7">111.0 nmol/h/mg enzyme with 4alpha-carboxy-4beta-methyl-5alpha-cholest-8,24-dien-3beta-ol as substrate</Vmax>
        <Vmax evidence="6">86.0 nmol/h/mg enzyme with 4alpha-carboxy-cholest-7-en-3beta-ol as substrate</Vmax>
        <Vmax evidence="6">77.0 nmol/h/mg enzyme with 3alpha-deutero-4alpha-carboxy-cholest-7-en-3beta-ol as substrate</Vmax>
        <Vmax evidence="6">5.7 nmol/h/mg enzyme with 4alpha-carboxy-cholest-7-en-3alpha-ol as substrate</Vmax>
        <Vmax evidence="6">113.0 nmol/h/mg enzyme with 4alpha-carboxy-4beta-methyl-cholest-8,24-dien-3beta-ol as substrate</Vmax>
    </kinetics>
</comment>
<comment type="pathway">
    <text evidence="6">Steroid biosynthesis; zymosterol biosynthesis; zymosterol from lanosterol: step 4/6.</text>
</comment>
<comment type="subcellular location">
    <subcellularLocation>
        <location evidence="1">Endoplasmic reticulum membrane</location>
        <topology evidence="3">Multi-pass membrane protein</topology>
    </subcellularLocation>
</comment>
<comment type="alternative products">
    <event type="alternative splicing"/>
    <isoform>
        <id>Q9FX01-1</id>
        <name>1</name>
        <sequence type="displayed"/>
    </isoform>
    <isoform>
        <id>Q9FX01-2</id>
        <name>2</name>
        <sequence type="described" ref="VSP_037002"/>
    </isoform>
</comment>
<comment type="domain">
    <text>The RETICULON domain is partial in comparison with the other paralogs.</text>
</comment>
<comment type="disruption phenotype">
    <text evidence="8">No noticeable phenotype.</text>
</comment>
<comment type="miscellaneous">
    <molecule>Isoform 2</molecule>
    <text evidence="12">May be due to a competing acceptor splice site.</text>
</comment>
<comment type="similarity">
    <text evidence="12">Belongs to the 3-beta-HSD family.</text>
</comment>
<comment type="caution">
    <text evidence="12">Lacks one transmembrane, which is a conserved feature of the family.</text>
</comment>
<comment type="sequence caution" evidence="12">
    <conflict type="erroneous initiation">
        <sequence resource="EMBL-CDS" id="AAM62504"/>
    </conflict>
</comment>
<comment type="sequence caution" evidence="12">
    <conflict type="erroneous initiation">
        <sequence resource="EMBL-CDS" id="AAY28502"/>
    </conflict>
</comment>
<comment type="sequence caution" evidence="12">
    <molecule>Isoform 2</molecule>
    <conflict type="erroneous initiation">
        <sequence resource="EMBL-CDS" id="AAM62504"/>
    </conflict>
    <text>Extended N-terminus.</text>
</comment>
<comment type="sequence caution" evidence="12">
    <molecule>Isoform 2</molecule>
    <conflict type="erroneous initiation">
        <sequence resource="EMBL-CDS" id="AAY28502"/>
    </conflict>
    <text>Extended N-terminus.</text>
</comment>
<feature type="chain" id="PRO_0000371279" description="3beta-hydroxysteroid-dehydrogenase/decarboxylase isoform 1">
    <location>
        <begin position="1"/>
        <end position="439"/>
    </location>
</feature>
<feature type="transmembrane region" description="Helical" evidence="3">
    <location>
        <begin position="381"/>
        <end position="401"/>
    </location>
</feature>
<feature type="transmembrane region" description="Helical" evidence="3">
    <location>
        <begin position="405"/>
        <end position="425"/>
    </location>
</feature>
<feature type="domain" description="Reticulon; atypical" evidence="4">
    <location>
        <begin position="371"/>
        <end position="439"/>
    </location>
</feature>
<feature type="active site" description="Proton donor" evidence="2">
    <location>
        <position position="165"/>
    </location>
</feature>
<feature type="binding site" evidence="2">
    <location>
        <begin position="16"/>
        <end position="21"/>
    </location>
    <ligand>
        <name>NAD(+)</name>
        <dbReference type="ChEBI" id="CHEBI:57540"/>
    </ligand>
</feature>
<feature type="binding site" evidence="2">
    <location>
        <position position="161"/>
    </location>
    <ligand>
        <name>NAD(+)</name>
        <dbReference type="ChEBI" id="CHEBI:57540"/>
    </ligand>
</feature>
<feature type="binding site" evidence="2">
    <location>
        <position position="165"/>
    </location>
    <ligand>
        <name>NAD(+)</name>
        <dbReference type="ChEBI" id="CHEBI:57540"/>
    </ligand>
</feature>
<feature type="site" description="Essential for the 3betaHSD/D activity" evidence="7">
    <location>
        <position position="41"/>
    </location>
</feature>
<feature type="site" description="Essential for the 3betaHSD/D activity" evidence="7">
    <location>
        <position position="72"/>
    </location>
</feature>
<feature type="site" description="Essential for the 3betaHSD/D activity" evidence="7">
    <location>
        <position position="131"/>
    </location>
</feature>
<feature type="site" description="Essential for the 3betaHSD/D activity" evidence="7">
    <location>
        <position position="161"/>
    </location>
</feature>
<feature type="site" description="Essential for the 3betaHSD/D activity" evidence="7">
    <location>
        <position position="165"/>
    </location>
</feature>
<feature type="site" description="Essential for the 3betaHSD/D activity" evidence="7">
    <location>
        <position position="328"/>
    </location>
</feature>
<feature type="glycosylation site" description="N-linked (GlcNAc...) asparagine" evidence="5">
    <location>
        <position position="75"/>
    </location>
</feature>
<feature type="glycosylation site" description="N-linked (GlcNAc...) asparagine" evidence="5">
    <location>
        <position position="158"/>
    </location>
</feature>
<feature type="glycosylation site" description="N-linked (GlcNAc...) asparagine" evidence="5">
    <location>
        <position position="327"/>
    </location>
</feature>
<feature type="splice variant" id="VSP_037002" description="In isoform 2." evidence="9 11">
    <location>
        <begin position="371"/>
        <end position="427"/>
    </location>
</feature>
<feature type="mutagenesis site" description="Lost activity." evidence="7">
    <original>D</original>
    <variation>V</variation>
    <location>
        <position position="41"/>
    </location>
</feature>
<feature type="mutagenesis site" description="Lost activity." evidence="7">
    <original>D</original>
    <variation>A</variation>
    <variation>V</variation>
    <location>
        <position position="72"/>
    </location>
</feature>
<feature type="mutagenesis site" description="Lost activity." evidence="7">
    <original>T</original>
    <variation>V</variation>
    <location>
        <position position="131"/>
    </location>
</feature>
<feature type="mutagenesis site" description="Reduced activity with slower catalysis and lower substrate binding." evidence="7">
    <original>S</original>
    <variation>A</variation>
    <location>
        <position position="133"/>
    </location>
</feature>
<feature type="mutagenesis site" description="Normal activity, but slower catalysis with 4alpha-carboxysterol as substrate." evidence="7">
    <original>S</original>
    <variation>A</variation>
    <location>
        <position position="135"/>
    </location>
</feature>
<feature type="mutagenesis site" description="Altered activity due to reduced affinity and catalysis and leading to lower amount of C4-demethylated sterols and higher quantities of 4,4-dimethylated sterol intermediates, and a higher ratio of 4,4-dimethylsterols to 4alpha-methylsterols." evidence="7">
    <original>S</original>
    <variation>T</variation>
    <location>
        <position position="135"/>
    </location>
</feature>
<feature type="mutagenesis site" description="Altered activity leading to an exclusive production of C4-methylated sterols and 4alpha-carboxy-3beta-hydroxy sterols." evidence="7">
    <original>S</original>
    <variation>Y</variation>
    <location>
        <position position="135"/>
    </location>
</feature>
<feature type="mutagenesis site" description="Lost activity." evidence="7">
    <original>Y</original>
    <variation>F</variation>
    <location>
        <position position="161"/>
    </location>
</feature>
<feature type="mutagenesis site" description="Lost activity." evidence="7">
    <original>K</original>
    <variation>I</variation>
    <location>
        <position position="165"/>
    </location>
</feature>
<feature type="mutagenesis site" description="Normal activity." evidence="7">
    <original>R</original>
    <variation>I</variation>
    <location>
        <position position="320"/>
    </location>
</feature>
<feature type="mutagenesis site" description="Lost activity." evidence="7">
    <original>R</original>
    <variation>I</variation>
    <location>
        <position position="328"/>
    </location>
</feature>
<feature type="sequence conflict" description="In Ref. 6; AAM62504." evidence="12" ref="6">
    <original>N</original>
    <variation>D</variation>
    <location>
        <position position="49"/>
    </location>
</feature>
<feature type="sequence conflict" description="In Ref. 1; AAY28502." evidence="12" ref="1">
    <original>S</original>
    <variation>P</variation>
    <location>
        <position position="70"/>
    </location>
</feature>
<feature type="sequence conflict" description="In Ref. 6; AAM62504." evidence="12" ref="6">
    <original>V</original>
    <variation>F</variation>
    <location>
        <position position="228"/>
    </location>
</feature>
<feature type="sequence conflict" description="In Ref. 1; AAY28502." evidence="12" ref="1">
    <original>K</original>
    <variation>R</variation>
    <location>
        <position position="336"/>
    </location>
</feature>
<dbReference type="EC" id="1.1.1.418" evidence="6 7"/>
<dbReference type="EMBL" id="AY957470">
    <property type="protein sequence ID" value="AAY28502.1"/>
    <property type="status" value="ALT_INIT"/>
    <property type="molecule type" value="mRNA"/>
</dbReference>
<dbReference type="EMBL" id="AC015449">
    <property type="protein sequence ID" value="AAG11424.1"/>
    <property type="molecule type" value="Genomic_DNA"/>
</dbReference>
<dbReference type="EMBL" id="CP002684">
    <property type="protein sequence ID" value="AEE32152.1"/>
    <property type="molecule type" value="Genomic_DNA"/>
</dbReference>
<dbReference type="EMBL" id="CP002684">
    <property type="protein sequence ID" value="AEE32153.1"/>
    <property type="molecule type" value="Genomic_DNA"/>
</dbReference>
<dbReference type="EMBL" id="AK117478">
    <property type="protein sequence ID" value="BAC42142.1"/>
    <property type="molecule type" value="mRNA"/>
</dbReference>
<dbReference type="EMBL" id="BT005166">
    <property type="protein sequence ID" value="AAO50699.1"/>
    <property type="molecule type" value="mRNA"/>
</dbReference>
<dbReference type="EMBL" id="AY085272">
    <property type="protein sequence ID" value="AAM62504.1"/>
    <property type="status" value="ALT_INIT"/>
    <property type="molecule type" value="mRNA"/>
</dbReference>
<dbReference type="PIR" id="F96513">
    <property type="entry name" value="F96513"/>
</dbReference>
<dbReference type="RefSeq" id="NP_564502.1">
    <molecule id="Q9FX01-2"/>
    <property type="nucleotide sequence ID" value="NM_103623.5"/>
</dbReference>
<dbReference type="RefSeq" id="NP_849779.1">
    <molecule id="Q9FX01-1"/>
    <property type="nucleotide sequence ID" value="NM_179448.4"/>
</dbReference>
<dbReference type="SMR" id="Q9FX01"/>
<dbReference type="BioGRID" id="26357">
    <property type="interactions" value="4"/>
</dbReference>
<dbReference type="FunCoup" id="Q9FX01">
    <property type="interactions" value="1922"/>
</dbReference>
<dbReference type="IntAct" id="Q9FX01">
    <property type="interactions" value="2"/>
</dbReference>
<dbReference type="STRING" id="3702.Q9FX01"/>
<dbReference type="GlyCosmos" id="Q9FX01">
    <property type="glycosylation" value="3 sites, No reported glycans"/>
</dbReference>
<dbReference type="GlyGen" id="Q9FX01">
    <property type="glycosylation" value="3 sites"/>
</dbReference>
<dbReference type="PaxDb" id="3702-AT1G47290.2"/>
<dbReference type="ProteomicsDB" id="232129">
    <molecule id="Q9FX01-1"/>
</dbReference>
<dbReference type="EnsemblPlants" id="AT1G47290.1">
    <molecule id="Q9FX01-2"/>
    <property type="protein sequence ID" value="AT1G47290.1"/>
    <property type="gene ID" value="AT1G47290"/>
</dbReference>
<dbReference type="EnsemblPlants" id="AT1G47290.2">
    <molecule id="Q9FX01-1"/>
    <property type="protein sequence ID" value="AT1G47290.2"/>
    <property type="gene ID" value="AT1G47290"/>
</dbReference>
<dbReference type="GeneID" id="841132"/>
<dbReference type="Gramene" id="AT1G47290.1">
    <molecule id="Q9FX01-2"/>
    <property type="protein sequence ID" value="AT1G47290.1"/>
    <property type="gene ID" value="AT1G47290"/>
</dbReference>
<dbReference type="Gramene" id="AT1G47290.2">
    <molecule id="Q9FX01-1"/>
    <property type="protein sequence ID" value="AT1G47290.2"/>
    <property type="gene ID" value="AT1G47290"/>
</dbReference>
<dbReference type="KEGG" id="ath:AT1G47290"/>
<dbReference type="Araport" id="AT1G47290"/>
<dbReference type="TAIR" id="AT1G47290">
    <property type="gene designation" value="3BETAHSD/D1"/>
</dbReference>
<dbReference type="eggNOG" id="KOG1430">
    <property type="taxonomic scope" value="Eukaryota"/>
</dbReference>
<dbReference type="InParanoid" id="Q9FX01"/>
<dbReference type="OMA" id="STAHWFD"/>
<dbReference type="PhylomeDB" id="Q9FX01"/>
<dbReference type="BioCyc" id="ARA:AT1G47290-MONOMER"/>
<dbReference type="BioCyc" id="MetaCyc:AT1G47290-MONOMER"/>
<dbReference type="BRENDA" id="1.1.1.418">
    <property type="organism ID" value="399"/>
</dbReference>
<dbReference type="UniPathway" id="UPA00770">
    <property type="reaction ID" value="UER00757"/>
</dbReference>
<dbReference type="PRO" id="PR:Q9FX01"/>
<dbReference type="Proteomes" id="UP000006548">
    <property type="component" value="Chromosome 1"/>
</dbReference>
<dbReference type="ExpressionAtlas" id="Q9FX01">
    <property type="expression patterns" value="baseline and differential"/>
</dbReference>
<dbReference type="GO" id="GO:0005789">
    <property type="term" value="C:endoplasmic reticulum membrane"/>
    <property type="evidence" value="ECO:0007669"/>
    <property type="project" value="UniProtKB-SubCell"/>
</dbReference>
<dbReference type="GO" id="GO:0016020">
    <property type="term" value="C:membrane"/>
    <property type="evidence" value="ECO:0000314"/>
    <property type="project" value="TAIR"/>
</dbReference>
<dbReference type="GO" id="GO:0102175">
    <property type="term" value="F:3-beta-hydroxysteroid dehydrogenase (NAD+)/C4-decarboxylase activity"/>
    <property type="evidence" value="ECO:0007669"/>
    <property type="project" value="UniProtKB-EC"/>
</dbReference>
<dbReference type="GO" id="GO:0060918">
    <property type="term" value="P:auxin transport"/>
    <property type="evidence" value="ECO:0000315"/>
    <property type="project" value="UniProtKB"/>
</dbReference>
<dbReference type="GO" id="GO:0099402">
    <property type="term" value="P:plant organ development"/>
    <property type="evidence" value="ECO:0000315"/>
    <property type="project" value="UniProtKB"/>
</dbReference>
<dbReference type="GO" id="GO:0032409">
    <property type="term" value="P:regulation of transporter activity"/>
    <property type="evidence" value="ECO:0000315"/>
    <property type="project" value="UniProtKB"/>
</dbReference>
<dbReference type="GO" id="GO:0016126">
    <property type="term" value="P:sterol biosynthetic process"/>
    <property type="evidence" value="ECO:0007669"/>
    <property type="project" value="UniProtKB-KW"/>
</dbReference>
<dbReference type="CDD" id="cd09813">
    <property type="entry name" value="3b-HSD-NSDHL-like_SDR_e"/>
    <property type="match status" value="1"/>
</dbReference>
<dbReference type="FunFam" id="3.40.50.720:FF:000273">
    <property type="entry name" value="Reticulon-like protein"/>
    <property type="match status" value="1"/>
</dbReference>
<dbReference type="Gene3D" id="3.40.50.720">
    <property type="entry name" value="NAD(P)-binding Rossmann-like Domain"/>
    <property type="match status" value="1"/>
</dbReference>
<dbReference type="InterPro" id="IPR002225">
    <property type="entry name" value="3Beta_OHSteriod_DH/Estase"/>
</dbReference>
<dbReference type="InterPro" id="IPR050177">
    <property type="entry name" value="Lipid_A_modif_metabolic_enz"/>
</dbReference>
<dbReference type="InterPro" id="IPR036291">
    <property type="entry name" value="NAD(P)-bd_dom_sf"/>
</dbReference>
<dbReference type="PANTHER" id="PTHR43245">
    <property type="entry name" value="BIFUNCTIONAL POLYMYXIN RESISTANCE PROTEIN ARNA"/>
    <property type="match status" value="1"/>
</dbReference>
<dbReference type="PANTHER" id="PTHR43245:SF51">
    <property type="entry name" value="SHORT CHAIN DEHYDROGENASE_REDUCTASE FAMILY 42E, MEMBER 2"/>
    <property type="match status" value="1"/>
</dbReference>
<dbReference type="Pfam" id="PF01073">
    <property type="entry name" value="3Beta_HSD"/>
    <property type="match status" value="1"/>
</dbReference>
<dbReference type="SUPFAM" id="SSF51735">
    <property type="entry name" value="NAD(P)-binding Rossmann-fold domains"/>
    <property type="match status" value="1"/>
</dbReference>
<accession>Q9FX01</accession>
<accession>Q0VH36</accession>
<accession>Q8LER8</accession>
<keyword id="KW-0025">Alternative splicing</keyword>
<keyword id="KW-0256">Endoplasmic reticulum</keyword>
<keyword id="KW-0325">Glycoprotein</keyword>
<keyword id="KW-0444">Lipid biosynthesis</keyword>
<keyword id="KW-0443">Lipid metabolism</keyword>
<keyword id="KW-0472">Membrane</keyword>
<keyword id="KW-0520">NAD</keyword>
<keyword id="KW-0560">Oxidoreductase</keyword>
<keyword id="KW-1185">Reference proteome</keyword>
<keyword id="KW-0752">Steroid biosynthesis</keyword>
<keyword id="KW-0753">Steroid metabolism</keyword>
<keyword id="KW-0756">Sterol biosynthesis</keyword>
<keyword id="KW-1207">Sterol metabolism</keyword>
<keyword id="KW-0812">Transmembrane</keyword>
<keyword id="KW-1133">Transmembrane helix</keyword>